<keyword id="KW-0193">Cuticle</keyword>
<keyword id="KW-0903">Direct protein sequencing</keyword>
<evidence type="ECO:0000255" key="1">
    <source>
        <dbReference type="PROSITE-ProRule" id="PRU00497"/>
    </source>
</evidence>
<accession>P14487</accession>
<feature type="chain" id="PRO_0000196131" description="Larval cuticle protein SC6">
    <location>
        <begin position="1"/>
        <end position="39" status="greater than"/>
    </location>
</feature>
<feature type="domain" description="Chitin-binding type R&amp;R" evidence="1">
    <location>
        <begin position="15"/>
        <end position="39" status="greater than"/>
    </location>
</feature>
<feature type="non-terminal residue">
    <location>
        <position position="39"/>
    </location>
</feature>
<protein>
    <recommendedName>
        <fullName>Larval cuticle protein SC6</fullName>
    </recommendedName>
</protein>
<proteinExistence type="evidence at protein level"/>
<name>CUP6_SARBU</name>
<comment type="function">
    <text>Component of the cuticle of the larva of flesh fly.</text>
</comment>
<reference key="1">
    <citation type="journal article" date="1985" name="J. Mol. Evol.">
        <title>Sarcophagid larval proteins: partial sequence homologies among three cuticle proteins and related structures of drosophilids.</title>
        <authorList>
            <person name="Henzel W.J."/>
            <person name="Mole J.E."/>
            <person name="Mulligan K."/>
            <person name="Lipke H."/>
        </authorList>
    </citation>
    <scope>PROTEIN SEQUENCE</scope>
</reference>
<sequence length="39" mass="4314">NEDANVIKSYSDVGVDQFKYGLELDNSIKADQEGHLEGD</sequence>
<dbReference type="PIR" id="C24553">
    <property type="entry name" value="C24553"/>
</dbReference>
<dbReference type="GO" id="GO:0042302">
    <property type="term" value="F:structural constituent of cuticle"/>
    <property type="evidence" value="ECO:0007669"/>
    <property type="project" value="UniProtKB-KW"/>
</dbReference>
<organism>
    <name type="scientific">Sarcophaga bullata</name>
    <name type="common">Grey flesh fly</name>
    <name type="synonym">Neobellieria bullata</name>
    <dbReference type="NCBI Taxonomy" id="7385"/>
    <lineage>
        <taxon>Eukaryota</taxon>
        <taxon>Metazoa</taxon>
        <taxon>Ecdysozoa</taxon>
        <taxon>Arthropoda</taxon>
        <taxon>Hexapoda</taxon>
        <taxon>Insecta</taxon>
        <taxon>Pterygota</taxon>
        <taxon>Neoptera</taxon>
        <taxon>Endopterygota</taxon>
        <taxon>Diptera</taxon>
        <taxon>Brachycera</taxon>
        <taxon>Muscomorpha</taxon>
        <taxon>Oestroidea</taxon>
        <taxon>Sarcophagidae</taxon>
        <taxon>Sarcophaga</taxon>
        <taxon>Neobellieria</taxon>
    </lineage>
</organism>